<keyword id="KW-1185">Reference proteome</keyword>
<keyword id="KW-0687">Ribonucleoprotein</keyword>
<keyword id="KW-0689">Ribosomal protein</keyword>
<dbReference type="EMBL" id="CT971583">
    <property type="protein sequence ID" value="CAK24324.1"/>
    <property type="molecule type" value="Genomic_DNA"/>
</dbReference>
<dbReference type="SMR" id="A5GN09"/>
<dbReference type="STRING" id="32051.SynWH7803_1898"/>
<dbReference type="KEGG" id="syx:SynWH7803_1898"/>
<dbReference type="eggNOG" id="COG0230">
    <property type="taxonomic scope" value="Bacteria"/>
</dbReference>
<dbReference type="HOGENOM" id="CLU_129938_2_1_3"/>
<dbReference type="Proteomes" id="UP000001566">
    <property type="component" value="Chromosome"/>
</dbReference>
<dbReference type="GO" id="GO:1990904">
    <property type="term" value="C:ribonucleoprotein complex"/>
    <property type="evidence" value="ECO:0007669"/>
    <property type="project" value="UniProtKB-KW"/>
</dbReference>
<dbReference type="GO" id="GO:0005840">
    <property type="term" value="C:ribosome"/>
    <property type="evidence" value="ECO:0007669"/>
    <property type="project" value="UniProtKB-KW"/>
</dbReference>
<dbReference type="GO" id="GO:0003735">
    <property type="term" value="F:structural constituent of ribosome"/>
    <property type="evidence" value="ECO:0007669"/>
    <property type="project" value="InterPro"/>
</dbReference>
<dbReference type="GO" id="GO:0006412">
    <property type="term" value="P:translation"/>
    <property type="evidence" value="ECO:0007669"/>
    <property type="project" value="UniProtKB-UniRule"/>
</dbReference>
<dbReference type="Gene3D" id="1.10.287.3980">
    <property type="match status" value="1"/>
</dbReference>
<dbReference type="HAMAP" id="MF_00391">
    <property type="entry name" value="Ribosomal_bL34"/>
    <property type="match status" value="1"/>
</dbReference>
<dbReference type="InterPro" id="IPR000271">
    <property type="entry name" value="Ribosomal_bL34"/>
</dbReference>
<dbReference type="InterPro" id="IPR020939">
    <property type="entry name" value="Ribosomal_bL34_CS"/>
</dbReference>
<dbReference type="NCBIfam" id="TIGR01030">
    <property type="entry name" value="rpmH_bact"/>
    <property type="match status" value="1"/>
</dbReference>
<dbReference type="Pfam" id="PF00468">
    <property type="entry name" value="Ribosomal_L34"/>
    <property type="match status" value="1"/>
</dbReference>
<dbReference type="PROSITE" id="PS00784">
    <property type="entry name" value="RIBOSOMAL_L34"/>
    <property type="match status" value="1"/>
</dbReference>
<accession>A5GN09</accession>
<gene>
    <name evidence="1" type="primary">rpmH</name>
    <name evidence="1" type="synonym">rpl34</name>
    <name type="ordered locus">SynWH7803_1898</name>
</gene>
<organism>
    <name type="scientific">Synechococcus sp. (strain WH7803)</name>
    <dbReference type="NCBI Taxonomy" id="32051"/>
    <lineage>
        <taxon>Bacteria</taxon>
        <taxon>Bacillati</taxon>
        <taxon>Cyanobacteriota</taxon>
        <taxon>Cyanophyceae</taxon>
        <taxon>Synechococcales</taxon>
        <taxon>Synechococcaceae</taxon>
        <taxon>Synechococcus</taxon>
    </lineage>
</organism>
<feature type="chain" id="PRO_1000013476" description="Large ribosomal subunit protein bL34">
    <location>
        <begin position="1"/>
        <end position="45"/>
    </location>
</feature>
<feature type="region of interest" description="Disordered" evidence="2">
    <location>
        <begin position="1"/>
        <end position="45"/>
    </location>
</feature>
<feature type="compositionally biased region" description="Basic residues" evidence="2">
    <location>
        <begin position="10"/>
        <end position="45"/>
    </location>
</feature>
<comment type="similarity">
    <text evidence="1">Belongs to the bacterial ribosomal protein bL34 family.</text>
</comment>
<proteinExistence type="inferred from homology"/>
<protein>
    <recommendedName>
        <fullName evidence="1">Large ribosomal subunit protein bL34</fullName>
    </recommendedName>
    <alternativeName>
        <fullName evidence="3">50S ribosomal protein L34</fullName>
    </alternativeName>
</protein>
<sequence>MTKRTLGGTSRKRKRVSGFRVRMRSHTGRRVIRTRRKRGRSRLAV</sequence>
<name>RL34_SYNPW</name>
<evidence type="ECO:0000255" key="1">
    <source>
        <dbReference type="HAMAP-Rule" id="MF_00391"/>
    </source>
</evidence>
<evidence type="ECO:0000256" key="2">
    <source>
        <dbReference type="SAM" id="MobiDB-lite"/>
    </source>
</evidence>
<evidence type="ECO:0000305" key="3"/>
<reference key="1">
    <citation type="submission" date="2006-05" db="EMBL/GenBank/DDBJ databases">
        <authorList>
            <consortium name="Genoscope"/>
        </authorList>
    </citation>
    <scope>NUCLEOTIDE SEQUENCE [LARGE SCALE GENOMIC DNA]</scope>
    <source>
        <strain>WH7803</strain>
    </source>
</reference>